<feature type="chain" id="PRO_0000062287" description="Large ribosomal subunit protein uL16c">
    <location>
        <begin position="1"/>
        <end position="135"/>
    </location>
</feature>
<feature type="sequence conflict" description="In Ref. 2." evidence="2" ref="2">
    <original>MLS</original>
    <variation>MNYN</variation>
    <location>
        <begin position="1"/>
        <end position="3"/>
    </location>
</feature>
<protein>
    <recommendedName>
        <fullName evidence="1">Large ribosomal subunit protein uL16c</fullName>
    </recommendedName>
    <alternativeName>
        <fullName evidence="2">50S ribosomal protein L16, chloroplastic</fullName>
    </alternativeName>
</protein>
<comment type="subunit">
    <text evidence="1">Part of the 50S ribosomal subunit.</text>
</comment>
<comment type="subcellular location">
    <subcellularLocation>
        <location>Plastid</location>
        <location>Chloroplast</location>
    </subcellularLocation>
</comment>
<comment type="similarity">
    <text evidence="1">Belongs to the universal ribosomal protein uL16 family.</text>
</comment>
<organism>
    <name type="scientific">Lactuca sativa</name>
    <name type="common">Garden lettuce</name>
    <dbReference type="NCBI Taxonomy" id="4236"/>
    <lineage>
        <taxon>Eukaryota</taxon>
        <taxon>Viridiplantae</taxon>
        <taxon>Streptophyta</taxon>
        <taxon>Embryophyta</taxon>
        <taxon>Tracheophyta</taxon>
        <taxon>Spermatophyta</taxon>
        <taxon>Magnoliopsida</taxon>
        <taxon>eudicotyledons</taxon>
        <taxon>Gunneridae</taxon>
        <taxon>Pentapetalae</taxon>
        <taxon>asterids</taxon>
        <taxon>campanulids</taxon>
        <taxon>Asterales</taxon>
        <taxon>Asteraceae</taxon>
        <taxon>Cichorioideae</taxon>
        <taxon>Cichorieae</taxon>
        <taxon>Lactucinae</taxon>
        <taxon>Lactuca</taxon>
    </lineage>
</organism>
<dbReference type="EMBL" id="AP007232">
    <property type="protein sequence ID" value="BAE47633.1"/>
    <property type="molecule type" value="Genomic_DNA"/>
</dbReference>
<dbReference type="EMBL" id="DQ383816">
    <property type="protein sequence ID" value="ABD47270.1"/>
    <property type="molecule type" value="Genomic_DNA"/>
</dbReference>
<dbReference type="RefSeq" id="YP_398366.1">
    <property type="nucleotide sequence ID" value="NC_007578.1"/>
</dbReference>
<dbReference type="SMR" id="Q332T9"/>
<dbReference type="GeneID" id="3772812"/>
<dbReference type="KEGG" id="lsv:3772812"/>
<dbReference type="OrthoDB" id="1850746at2759"/>
<dbReference type="GO" id="GO:0009507">
    <property type="term" value="C:chloroplast"/>
    <property type="evidence" value="ECO:0007669"/>
    <property type="project" value="UniProtKB-SubCell"/>
</dbReference>
<dbReference type="GO" id="GO:1990904">
    <property type="term" value="C:ribonucleoprotein complex"/>
    <property type="evidence" value="ECO:0007669"/>
    <property type="project" value="UniProtKB-KW"/>
</dbReference>
<dbReference type="GO" id="GO:0005840">
    <property type="term" value="C:ribosome"/>
    <property type="evidence" value="ECO:0007669"/>
    <property type="project" value="UniProtKB-KW"/>
</dbReference>
<dbReference type="GO" id="GO:0019843">
    <property type="term" value="F:rRNA binding"/>
    <property type="evidence" value="ECO:0007669"/>
    <property type="project" value="InterPro"/>
</dbReference>
<dbReference type="GO" id="GO:0003735">
    <property type="term" value="F:structural constituent of ribosome"/>
    <property type="evidence" value="ECO:0007669"/>
    <property type="project" value="InterPro"/>
</dbReference>
<dbReference type="GO" id="GO:0006412">
    <property type="term" value="P:translation"/>
    <property type="evidence" value="ECO:0007669"/>
    <property type="project" value="UniProtKB-UniRule"/>
</dbReference>
<dbReference type="CDD" id="cd01433">
    <property type="entry name" value="Ribosomal_L16_L10e"/>
    <property type="match status" value="1"/>
</dbReference>
<dbReference type="FunFam" id="3.90.1170.10:FF:000001">
    <property type="entry name" value="50S ribosomal protein L16"/>
    <property type="match status" value="1"/>
</dbReference>
<dbReference type="Gene3D" id="3.90.1170.10">
    <property type="entry name" value="Ribosomal protein L10e/L16"/>
    <property type="match status" value="1"/>
</dbReference>
<dbReference type="HAMAP" id="MF_01342">
    <property type="entry name" value="Ribosomal_uL16"/>
    <property type="match status" value="1"/>
</dbReference>
<dbReference type="InterPro" id="IPR047873">
    <property type="entry name" value="Ribosomal_uL16"/>
</dbReference>
<dbReference type="InterPro" id="IPR000114">
    <property type="entry name" value="Ribosomal_uL16_bact-type"/>
</dbReference>
<dbReference type="InterPro" id="IPR020798">
    <property type="entry name" value="Ribosomal_uL16_CS"/>
</dbReference>
<dbReference type="InterPro" id="IPR016180">
    <property type="entry name" value="Ribosomal_uL16_dom"/>
</dbReference>
<dbReference type="InterPro" id="IPR036920">
    <property type="entry name" value="Ribosomal_uL16_sf"/>
</dbReference>
<dbReference type="NCBIfam" id="TIGR01164">
    <property type="entry name" value="rplP_bact"/>
    <property type="match status" value="1"/>
</dbReference>
<dbReference type="PANTHER" id="PTHR12220">
    <property type="entry name" value="50S/60S RIBOSOMAL PROTEIN L16"/>
    <property type="match status" value="1"/>
</dbReference>
<dbReference type="PANTHER" id="PTHR12220:SF13">
    <property type="entry name" value="LARGE RIBOSOMAL SUBUNIT PROTEIN UL16M"/>
    <property type="match status" value="1"/>
</dbReference>
<dbReference type="Pfam" id="PF00252">
    <property type="entry name" value="Ribosomal_L16"/>
    <property type="match status" value="1"/>
</dbReference>
<dbReference type="PRINTS" id="PR00060">
    <property type="entry name" value="RIBOSOMALL16"/>
</dbReference>
<dbReference type="SUPFAM" id="SSF54686">
    <property type="entry name" value="Ribosomal protein L16p/L10e"/>
    <property type="match status" value="1"/>
</dbReference>
<dbReference type="PROSITE" id="PS00586">
    <property type="entry name" value="RIBOSOMAL_L16_1"/>
    <property type="match status" value="1"/>
</dbReference>
<dbReference type="PROSITE" id="PS00701">
    <property type="entry name" value="RIBOSOMAL_L16_2"/>
    <property type="match status" value="1"/>
</dbReference>
<accession>Q332T9</accession>
<accession>Q1KXI4</accession>
<proteinExistence type="inferred from homology"/>
<name>RK16_LACSA</name>
<evidence type="ECO:0000255" key="1">
    <source>
        <dbReference type="HAMAP-Rule" id="MF_01342"/>
    </source>
</evidence>
<evidence type="ECO:0000305" key="2"/>
<sequence length="135" mass="15203">MLSPKRTRFRKQHRGRMKGISYRGNAICFGKYALQALEPAWITSRQIEAGRRAMTRNARRGGKIWVRIFPDKPVTVRPAETRMGSGKGSPEYWVAVVKPGRILYEMGGVTENIARRAISIAASKMPIRAQFIISG</sequence>
<gene>
    <name evidence="1" type="primary">rpl16</name>
</gene>
<geneLocation type="chloroplast"/>
<keyword id="KW-0150">Chloroplast</keyword>
<keyword id="KW-0934">Plastid</keyword>
<keyword id="KW-0687">Ribonucleoprotein</keyword>
<keyword id="KW-0689">Ribosomal protein</keyword>
<reference key="1">
    <citation type="journal article" date="2006" name="Transgenic Res.">
        <title>Efficient and stable transformation of Lactuca sativa L. cv. Cisco (lettuce) plastids.</title>
        <authorList>
            <person name="Kanamoto H."/>
            <person name="Yamashita A."/>
            <person name="Asao H."/>
            <person name="Okumura S."/>
            <person name="Takase H."/>
            <person name="Hattori M."/>
            <person name="Yokota A."/>
            <person name="Tomizawa K."/>
        </authorList>
    </citation>
    <scope>NUCLEOTIDE SEQUENCE [LARGE SCALE GENOMIC DNA]</scope>
    <source>
        <strain>cv. Cisco</strain>
    </source>
</reference>
<reference key="2">
    <citation type="submission" date="2006-01" db="EMBL/GenBank/DDBJ databases">
        <title>A comparison of the first two published chloroplast genomes in Asteraceae: Lactuca and Helianthus.</title>
        <authorList>
            <person name="Timme R.E."/>
            <person name="Kuehl J.V."/>
            <person name="Boore J.L."/>
            <person name="Jansen R.K."/>
        </authorList>
    </citation>
    <scope>NUCLEOTIDE SEQUENCE [LARGE SCALE GENOMIC DNA]</scope>
    <source>
        <strain>cv. Salinas</strain>
    </source>
</reference>